<gene>
    <name type="ordered locus">Nther_1806</name>
</gene>
<sequence>MISQDLINRINELYKKQKESGLTDEEQQEQQKLRQEYLKGIRKQVLKQMGEDPEKEPKNN</sequence>
<proteinExistence type="inferred from homology"/>
<reference key="1">
    <citation type="submission" date="2008-04" db="EMBL/GenBank/DDBJ databases">
        <title>Complete sequence of chromosome of Natranaerobius thermophilus JW/NM-WN-LF.</title>
        <authorList>
            <consortium name="US DOE Joint Genome Institute"/>
            <person name="Copeland A."/>
            <person name="Lucas S."/>
            <person name="Lapidus A."/>
            <person name="Glavina del Rio T."/>
            <person name="Dalin E."/>
            <person name="Tice H."/>
            <person name="Bruce D."/>
            <person name="Goodwin L."/>
            <person name="Pitluck S."/>
            <person name="Chertkov O."/>
            <person name="Brettin T."/>
            <person name="Detter J.C."/>
            <person name="Han C."/>
            <person name="Kuske C.R."/>
            <person name="Schmutz J."/>
            <person name="Larimer F."/>
            <person name="Land M."/>
            <person name="Hauser L."/>
            <person name="Kyrpides N."/>
            <person name="Lykidis A."/>
            <person name="Mesbah N.M."/>
            <person name="Wiegel J."/>
        </authorList>
    </citation>
    <scope>NUCLEOTIDE SEQUENCE [LARGE SCALE GENOMIC DNA]</scope>
    <source>
        <strain>ATCC BAA-1301 / DSM 18059 / JW/NM-WN-LF</strain>
    </source>
</reference>
<protein>
    <recommendedName>
        <fullName evidence="1">UPF0291 protein Nther_1806</fullName>
    </recommendedName>
</protein>
<comment type="subcellular location">
    <subcellularLocation>
        <location evidence="1">Cytoplasm</location>
    </subcellularLocation>
</comment>
<comment type="similarity">
    <text evidence="1">Belongs to the UPF0291 family.</text>
</comment>
<keyword id="KW-0963">Cytoplasm</keyword>
<keyword id="KW-1185">Reference proteome</keyword>
<name>Y1806_NATTJ</name>
<evidence type="ECO:0000255" key="1">
    <source>
        <dbReference type="HAMAP-Rule" id="MF_01103"/>
    </source>
</evidence>
<feature type="chain" id="PRO_1000137014" description="UPF0291 protein Nther_1806">
    <location>
        <begin position="1"/>
        <end position="60"/>
    </location>
</feature>
<accession>B2A5M4</accession>
<dbReference type="EMBL" id="CP001034">
    <property type="protein sequence ID" value="ACB85378.1"/>
    <property type="molecule type" value="Genomic_DNA"/>
</dbReference>
<dbReference type="RefSeq" id="WP_012448245.1">
    <property type="nucleotide sequence ID" value="NC_010718.1"/>
</dbReference>
<dbReference type="SMR" id="B2A5M4"/>
<dbReference type="FunCoup" id="B2A5M4">
    <property type="interactions" value="8"/>
</dbReference>
<dbReference type="STRING" id="457570.Nther_1806"/>
<dbReference type="KEGG" id="nth:Nther_1806"/>
<dbReference type="eggNOG" id="COG4224">
    <property type="taxonomic scope" value="Bacteria"/>
</dbReference>
<dbReference type="HOGENOM" id="CLU_173137_3_1_9"/>
<dbReference type="InParanoid" id="B2A5M4"/>
<dbReference type="Proteomes" id="UP000001683">
    <property type="component" value="Chromosome"/>
</dbReference>
<dbReference type="GO" id="GO:0005737">
    <property type="term" value="C:cytoplasm"/>
    <property type="evidence" value="ECO:0007669"/>
    <property type="project" value="UniProtKB-SubCell"/>
</dbReference>
<dbReference type="Gene3D" id="1.10.287.540">
    <property type="entry name" value="Helix hairpin bin"/>
    <property type="match status" value="1"/>
</dbReference>
<dbReference type="HAMAP" id="MF_01103">
    <property type="entry name" value="UPF0291"/>
    <property type="match status" value="1"/>
</dbReference>
<dbReference type="InterPro" id="IPR009242">
    <property type="entry name" value="DUF896"/>
</dbReference>
<dbReference type="PANTHER" id="PTHR37300">
    <property type="entry name" value="UPF0291 PROTEIN CBO2609/CLC_2481"/>
    <property type="match status" value="1"/>
</dbReference>
<dbReference type="PANTHER" id="PTHR37300:SF1">
    <property type="entry name" value="UPF0291 PROTEIN YNZC"/>
    <property type="match status" value="1"/>
</dbReference>
<dbReference type="Pfam" id="PF05979">
    <property type="entry name" value="DUF896"/>
    <property type="match status" value="1"/>
</dbReference>
<dbReference type="SUPFAM" id="SSF158221">
    <property type="entry name" value="YnzC-like"/>
    <property type="match status" value="1"/>
</dbReference>
<organism>
    <name type="scientific">Natranaerobius thermophilus (strain ATCC BAA-1301 / DSM 18059 / JW/NM-WN-LF)</name>
    <dbReference type="NCBI Taxonomy" id="457570"/>
    <lineage>
        <taxon>Bacteria</taxon>
        <taxon>Bacillati</taxon>
        <taxon>Bacillota</taxon>
        <taxon>Clostridia</taxon>
        <taxon>Natranaerobiales</taxon>
        <taxon>Natranaerobiaceae</taxon>
        <taxon>Natranaerobius</taxon>
    </lineage>
</organism>